<name>Y270_METJA</name>
<sequence length="78" mass="8962">MKNKREKMRPKSSTILILLMSVLILLLSIDILANHIIIKVDGYYYDGLGQKLAMKDVIPINASFNKIKSQLEKSMKFH</sequence>
<feature type="chain" id="PRO_0000106763" description="Uncharacterized protein MJ0270">
    <location>
        <begin position="1"/>
        <end position="78"/>
    </location>
</feature>
<feature type="transmembrane region" description="Helical" evidence="1">
    <location>
        <begin position="13"/>
        <end position="33"/>
    </location>
</feature>
<reference key="1">
    <citation type="journal article" date="1996" name="Science">
        <title>Complete genome sequence of the methanogenic archaeon, Methanococcus jannaschii.</title>
        <authorList>
            <person name="Bult C.J."/>
            <person name="White O."/>
            <person name="Olsen G.J."/>
            <person name="Zhou L."/>
            <person name="Fleischmann R.D."/>
            <person name="Sutton G.G."/>
            <person name="Blake J.A."/>
            <person name="FitzGerald L.M."/>
            <person name="Clayton R.A."/>
            <person name="Gocayne J.D."/>
            <person name="Kerlavage A.R."/>
            <person name="Dougherty B.A."/>
            <person name="Tomb J.-F."/>
            <person name="Adams M.D."/>
            <person name="Reich C.I."/>
            <person name="Overbeek R."/>
            <person name="Kirkness E.F."/>
            <person name="Weinstock K.G."/>
            <person name="Merrick J.M."/>
            <person name="Glodek A."/>
            <person name="Scott J.L."/>
            <person name="Geoghagen N.S.M."/>
            <person name="Weidman J.F."/>
            <person name="Fuhrmann J.L."/>
            <person name="Nguyen D."/>
            <person name="Utterback T.R."/>
            <person name="Kelley J.M."/>
            <person name="Peterson J.D."/>
            <person name="Sadow P.W."/>
            <person name="Hanna M.C."/>
            <person name="Cotton M.D."/>
            <person name="Roberts K.M."/>
            <person name="Hurst M.A."/>
            <person name="Kaine B.P."/>
            <person name="Borodovsky M."/>
            <person name="Klenk H.-P."/>
            <person name="Fraser C.M."/>
            <person name="Smith H.O."/>
            <person name="Woese C.R."/>
            <person name="Venter J.C."/>
        </authorList>
    </citation>
    <scope>NUCLEOTIDE SEQUENCE [LARGE SCALE GENOMIC DNA]</scope>
    <source>
        <strain>ATCC 43067 / DSM 2661 / JAL-1 / JCM 10045 / NBRC 100440</strain>
    </source>
</reference>
<gene>
    <name type="ordered locus">MJ0270</name>
</gene>
<evidence type="ECO:0000255" key="1"/>
<evidence type="ECO:0000305" key="2"/>
<protein>
    <recommendedName>
        <fullName>Uncharacterized protein MJ0270</fullName>
    </recommendedName>
</protein>
<dbReference type="EMBL" id="L77117">
    <property type="protein sequence ID" value="AAB98259.1"/>
    <property type="molecule type" value="Genomic_DNA"/>
</dbReference>
<dbReference type="PIR" id="G64333">
    <property type="entry name" value="G64333"/>
</dbReference>
<dbReference type="SMR" id="Q57718"/>
<dbReference type="STRING" id="243232.MJ_0270"/>
<dbReference type="PaxDb" id="243232-MJ_0270"/>
<dbReference type="EnsemblBacteria" id="AAB98259">
    <property type="protein sequence ID" value="AAB98259"/>
    <property type="gene ID" value="MJ_0270"/>
</dbReference>
<dbReference type="KEGG" id="mja:MJ_0270"/>
<dbReference type="HOGENOM" id="CLU_2613655_0_0_2"/>
<dbReference type="InParanoid" id="Q57718"/>
<dbReference type="Proteomes" id="UP000000805">
    <property type="component" value="Chromosome"/>
</dbReference>
<dbReference type="GO" id="GO:0016020">
    <property type="term" value="C:membrane"/>
    <property type="evidence" value="ECO:0007669"/>
    <property type="project" value="UniProtKB-SubCell"/>
</dbReference>
<proteinExistence type="predicted"/>
<accession>Q57718</accession>
<organism>
    <name type="scientific">Methanocaldococcus jannaschii (strain ATCC 43067 / DSM 2661 / JAL-1 / JCM 10045 / NBRC 100440)</name>
    <name type="common">Methanococcus jannaschii</name>
    <dbReference type="NCBI Taxonomy" id="243232"/>
    <lineage>
        <taxon>Archaea</taxon>
        <taxon>Methanobacteriati</taxon>
        <taxon>Methanobacteriota</taxon>
        <taxon>Methanomada group</taxon>
        <taxon>Methanococci</taxon>
        <taxon>Methanococcales</taxon>
        <taxon>Methanocaldococcaceae</taxon>
        <taxon>Methanocaldococcus</taxon>
    </lineage>
</organism>
<comment type="subcellular location">
    <subcellularLocation>
        <location evidence="2">Membrane</location>
        <topology evidence="2">Single-pass membrane protein</topology>
    </subcellularLocation>
</comment>
<keyword id="KW-0472">Membrane</keyword>
<keyword id="KW-1185">Reference proteome</keyword>
<keyword id="KW-0812">Transmembrane</keyword>
<keyword id="KW-1133">Transmembrane helix</keyword>